<sequence length="526" mass="56797">MKLFNPRLIVFIFALLLGVGFSVPSLLETKGPKITLGLDLRGGLNMLLGVQTDEALKNKYLSLASALEYNAKKQNILLKDIKSSLEGISFELLDEDEAKKLDALLLELQGHSQFEIKKEAEFYSVKLTPLEQEELRKNTILQVIGIIRNRLDQFGLAEPVVIQQGREEISVQLPGIKTLEEERRAKDLISKSAHLQMMAVDEEHNKDAMNMTDLEAQKLGSVLLSDAEMGGKILLKAIPILDGEMLTDAKVVYDQNNQPVVSFTLDAQGAKIFGDFSGANVGKRMAIVLDNKVYSAPVIRERIGGGSGQISGNFSVAQASDLAIALRSGAMNAPIQVLEKRIVGPSLGKDSIKTSIIALVGGFILVMGFMALYYSMAGVIACMALVVNLFLIVAVMAIFGATLTLPGMAGIVLTVGIAVDANIIINERIREVLREGEGVVKAIHLGYINASRAIFDSNITSLIASVLLYAYGTGAIKGFALTTGIGILASIITAIIGTQGIYQALLPKLAQTKSLYFWFGVKNKRA</sequence>
<proteinExistence type="inferred from homology"/>
<feature type="chain" id="PRO_0000095964" description="Protein translocase subunit SecD">
    <location>
        <begin position="1"/>
        <end position="526"/>
    </location>
</feature>
<feature type="transmembrane region" description="Helical" evidence="1">
    <location>
        <begin position="8"/>
        <end position="28"/>
    </location>
</feature>
<feature type="transmembrane region" description="Helical" evidence="1">
    <location>
        <begin position="356"/>
        <end position="376"/>
    </location>
</feature>
<feature type="transmembrane region" description="Helical" evidence="1">
    <location>
        <begin position="379"/>
        <end position="399"/>
    </location>
</feature>
<feature type="transmembrane region" description="Helical" evidence="1">
    <location>
        <begin position="405"/>
        <end position="425"/>
    </location>
</feature>
<feature type="transmembrane region" description="Helical" evidence="1">
    <location>
        <begin position="453"/>
        <end position="473"/>
    </location>
</feature>
<feature type="transmembrane region" description="Helical" evidence="1">
    <location>
        <begin position="478"/>
        <end position="498"/>
    </location>
</feature>
<evidence type="ECO:0000255" key="1">
    <source>
        <dbReference type="HAMAP-Rule" id="MF_01463"/>
    </source>
</evidence>
<protein>
    <recommendedName>
        <fullName evidence="1">Protein translocase subunit SecD</fullName>
    </recommendedName>
</protein>
<keyword id="KW-0997">Cell inner membrane</keyword>
<keyword id="KW-1003">Cell membrane</keyword>
<keyword id="KW-0472">Membrane</keyword>
<keyword id="KW-0653">Protein transport</keyword>
<keyword id="KW-0811">Translocation</keyword>
<keyword id="KW-0812">Transmembrane</keyword>
<keyword id="KW-1133">Transmembrane helix</keyword>
<keyword id="KW-0813">Transport</keyword>
<name>SECD_HELPJ</name>
<reference key="1">
    <citation type="journal article" date="1999" name="Nature">
        <title>Genomic sequence comparison of two unrelated isolates of the human gastric pathogen Helicobacter pylori.</title>
        <authorList>
            <person name="Alm R.A."/>
            <person name="Ling L.-S.L."/>
            <person name="Moir D.T."/>
            <person name="King B.L."/>
            <person name="Brown E.D."/>
            <person name="Doig P.C."/>
            <person name="Smith D.R."/>
            <person name="Noonan B."/>
            <person name="Guild B.C."/>
            <person name="deJonge B.L."/>
            <person name="Carmel G."/>
            <person name="Tummino P.J."/>
            <person name="Caruso A."/>
            <person name="Uria-Nickelsen M."/>
            <person name="Mills D.M."/>
            <person name="Ives C."/>
            <person name="Gibson R."/>
            <person name="Merberg D."/>
            <person name="Mills S.D."/>
            <person name="Jiang Q."/>
            <person name="Taylor D.E."/>
            <person name="Vovis G.F."/>
            <person name="Trust T.J."/>
        </authorList>
    </citation>
    <scope>NUCLEOTIDE SEQUENCE [LARGE SCALE GENOMIC DNA]</scope>
    <source>
        <strain>J99 / ATCC 700824</strain>
    </source>
</reference>
<organism>
    <name type="scientific">Helicobacter pylori (strain J99 / ATCC 700824)</name>
    <name type="common">Campylobacter pylori J99</name>
    <dbReference type="NCBI Taxonomy" id="85963"/>
    <lineage>
        <taxon>Bacteria</taxon>
        <taxon>Pseudomonadati</taxon>
        <taxon>Campylobacterota</taxon>
        <taxon>Epsilonproteobacteria</taxon>
        <taxon>Campylobacterales</taxon>
        <taxon>Helicobacteraceae</taxon>
        <taxon>Helicobacter</taxon>
    </lineage>
</organism>
<gene>
    <name evidence="1" type="primary">secD</name>
    <name type="ordered locus">jhp_1449</name>
</gene>
<accession>Q9ZJ66</accession>
<dbReference type="EMBL" id="AE001439">
    <property type="protein sequence ID" value="AAD07024.1"/>
    <property type="molecule type" value="Genomic_DNA"/>
</dbReference>
<dbReference type="PIR" id="D71805">
    <property type="entry name" value="D71805"/>
</dbReference>
<dbReference type="RefSeq" id="WP_000765450.1">
    <property type="nucleotide sequence ID" value="NC_000921.1"/>
</dbReference>
<dbReference type="SMR" id="Q9ZJ66"/>
<dbReference type="KEGG" id="hpj:jhp_1449"/>
<dbReference type="PATRIC" id="fig|85963.30.peg.1094"/>
<dbReference type="eggNOG" id="COG0342">
    <property type="taxonomic scope" value="Bacteria"/>
</dbReference>
<dbReference type="Proteomes" id="UP000000804">
    <property type="component" value="Chromosome"/>
</dbReference>
<dbReference type="GO" id="GO:0005886">
    <property type="term" value="C:plasma membrane"/>
    <property type="evidence" value="ECO:0007669"/>
    <property type="project" value="UniProtKB-SubCell"/>
</dbReference>
<dbReference type="GO" id="GO:0015450">
    <property type="term" value="F:protein-transporting ATPase activity"/>
    <property type="evidence" value="ECO:0007669"/>
    <property type="project" value="InterPro"/>
</dbReference>
<dbReference type="GO" id="GO:0065002">
    <property type="term" value="P:intracellular protein transmembrane transport"/>
    <property type="evidence" value="ECO:0007669"/>
    <property type="project" value="UniProtKB-UniRule"/>
</dbReference>
<dbReference type="GO" id="GO:0006605">
    <property type="term" value="P:protein targeting"/>
    <property type="evidence" value="ECO:0007669"/>
    <property type="project" value="UniProtKB-UniRule"/>
</dbReference>
<dbReference type="GO" id="GO:0043952">
    <property type="term" value="P:protein transport by the Sec complex"/>
    <property type="evidence" value="ECO:0007669"/>
    <property type="project" value="UniProtKB-UniRule"/>
</dbReference>
<dbReference type="FunFam" id="3.30.1360.200:FF:000002">
    <property type="entry name" value="Preprotein translocase subunit SecD"/>
    <property type="match status" value="1"/>
</dbReference>
<dbReference type="FunFam" id="1.20.1640.10:FF:000004">
    <property type="entry name" value="Protein translocase subunit SecD"/>
    <property type="match status" value="1"/>
</dbReference>
<dbReference type="Gene3D" id="3.30.1360.200">
    <property type="match status" value="1"/>
</dbReference>
<dbReference type="Gene3D" id="3.30.70.3400">
    <property type="match status" value="1"/>
</dbReference>
<dbReference type="Gene3D" id="1.20.1640.10">
    <property type="entry name" value="Multidrug efflux transporter AcrB transmembrane domain"/>
    <property type="match status" value="1"/>
</dbReference>
<dbReference type="HAMAP" id="MF_01463_B">
    <property type="entry name" value="SecD_B"/>
    <property type="match status" value="1"/>
</dbReference>
<dbReference type="InterPro" id="IPR001036">
    <property type="entry name" value="Acrflvin-R"/>
</dbReference>
<dbReference type="InterPro" id="IPR005791">
    <property type="entry name" value="SecD"/>
</dbReference>
<dbReference type="InterPro" id="IPR022813">
    <property type="entry name" value="SecD/SecF_arch_bac"/>
</dbReference>
<dbReference type="InterPro" id="IPR048631">
    <property type="entry name" value="SecD_1st"/>
</dbReference>
<dbReference type="InterPro" id="IPR048634">
    <property type="entry name" value="SecD_SecF_C"/>
</dbReference>
<dbReference type="InterPro" id="IPR055344">
    <property type="entry name" value="SecD_SecF_C_bact"/>
</dbReference>
<dbReference type="InterPro" id="IPR054384">
    <property type="entry name" value="SecDF_P1_head"/>
</dbReference>
<dbReference type="NCBIfam" id="TIGR00916">
    <property type="entry name" value="2A0604s01"/>
    <property type="match status" value="1"/>
</dbReference>
<dbReference type="NCBIfam" id="TIGR01129">
    <property type="entry name" value="secD"/>
    <property type="match status" value="1"/>
</dbReference>
<dbReference type="PANTHER" id="PTHR30081:SF1">
    <property type="entry name" value="PROTEIN TRANSLOCASE SUBUNIT SECD"/>
    <property type="match status" value="1"/>
</dbReference>
<dbReference type="PANTHER" id="PTHR30081">
    <property type="entry name" value="PROTEIN-EXPORT MEMBRANE PROTEIN SEC"/>
    <property type="match status" value="1"/>
</dbReference>
<dbReference type="Pfam" id="PF21760">
    <property type="entry name" value="SecD_1st"/>
    <property type="match status" value="1"/>
</dbReference>
<dbReference type="Pfam" id="PF02355">
    <property type="entry name" value="SecD_SecF_C"/>
    <property type="match status" value="1"/>
</dbReference>
<dbReference type="Pfam" id="PF22599">
    <property type="entry name" value="SecDF_P1_head"/>
    <property type="match status" value="1"/>
</dbReference>
<dbReference type="PRINTS" id="PR00702">
    <property type="entry name" value="ACRIFLAVINRP"/>
</dbReference>
<dbReference type="SUPFAM" id="SSF82866">
    <property type="entry name" value="Multidrug efflux transporter AcrB transmembrane domain"/>
    <property type="match status" value="1"/>
</dbReference>
<comment type="function">
    <text evidence="1">Part of the Sec protein translocase complex. Interacts with the SecYEG preprotein conducting channel. SecDF uses the proton motive force (PMF) to complete protein translocation after the ATP-dependent function of SecA.</text>
</comment>
<comment type="subunit">
    <text evidence="1">Forms a complex with SecF. Part of the essential Sec protein translocation apparatus which comprises SecA, SecYEG and auxiliary proteins SecDF-YajC and YidC.</text>
</comment>
<comment type="subcellular location">
    <subcellularLocation>
        <location evidence="1">Cell inner membrane</location>
        <topology evidence="1">Multi-pass membrane protein</topology>
    </subcellularLocation>
</comment>
<comment type="similarity">
    <text evidence="1">Belongs to the SecD/SecF family. SecD subfamily.</text>
</comment>